<comment type="function">
    <text evidence="1">Acts as a chaperone.</text>
</comment>
<comment type="induction">
    <text evidence="1">By stress conditions e.g. heat shock.</text>
</comment>
<comment type="similarity">
    <text evidence="1">Belongs to the heat shock protein 70 family.</text>
</comment>
<accession>Q16D45</accession>
<gene>
    <name evidence="1" type="primary">dnaK</name>
    <name type="ordered locus">RD1_0378</name>
</gene>
<reference key="1">
    <citation type="journal article" date="2007" name="J. Bacteriol.">
        <title>The complete genome sequence of Roseobacter denitrificans reveals a mixotrophic rather than photosynthetic metabolism.</title>
        <authorList>
            <person name="Swingley W.D."/>
            <person name="Sadekar S."/>
            <person name="Mastrian S.D."/>
            <person name="Matthies H.J."/>
            <person name="Hao J."/>
            <person name="Ramos H."/>
            <person name="Acharya C.R."/>
            <person name="Conrad A.L."/>
            <person name="Taylor H.L."/>
            <person name="Dejesa L.C."/>
            <person name="Shah M.K."/>
            <person name="O'Huallachain M.E."/>
            <person name="Lince M.T."/>
            <person name="Blankenship R.E."/>
            <person name="Beatty J.T."/>
            <person name="Touchman J.W."/>
        </authorList>
    </citation>
    <scope>NUCLEOTIDE SEQUENCE [LARGE SCALE GENOMIC DNA]</scope>
    <source>
        <strain>ATCC 33942 / OCh 114</strain>
    </source>
</reference>
<evidence type="ECO:0000255" key="1">
    <source>
        <dbReference type="HAMAP-Rule" id="MF_00332"/>
    </source>
</evidence>
<evidence type="ECO:0000256" key="2">
    <source>
        <dbReference type="SAM" id="MobiDB-lite"/>
    </source>
</evidence>
<feature type="chain" id="PRO_1000059652" description="Chaperone protein DnaK">
    <location>
        <begin position="1"/>
        <end position="636"/>
    </location>
</feature>
<feature type="region of interest" description="Disordered" evidence="2">
    <location>
        <begin position="533"/>
        <end position="552"/>
    </location>
</feature>
<feature type="region of interest" description="Disordered" evidence="2">
    <location>
        <begin position="595"/>
        <end position="636"/>
    </location>
</feature>
<feature type="compositionally biased region" description="Basic and acidic residues" evidence="2">
    <location>
        <begin position="540"/>
        <end position="552"/>
    </location>
</feature>
<feature type="compositionally biased region" description="Acidic residues" evidence="2">
    <location>
        <begin position="618"/>
        <end position="636"/>
    </location>
</feature>
<feature type="modified residue" description="Phosphothreonine; by autocatalysis" evidence="1">
    <location>
        <position position="197"/>
    </location>
</feature>
<name>DNAK_ROSDO</name>
<proteinExistence type="inferred from homology"/>
<organism>
    <name type="scientific">Roseobacter denitrificans (strain ATCC 33942 / OCh 114)</name>
    <name type="common">Erythrobacter sp. (strain OCh 114)</name>
    <name type="synonym">Roseobacter denitrificans</name>
    <dbReference type="NCBI Taxonomy" id="375451"/>
    <lineage>
        <taxon>Bacteria</taxon>
        <taxon>Pseudomonadati</taxon>
        <taxon>Pseudomonadota</taxon>
        <taxon>Alphaproteobacteria</taxon>
        <taxon>Rhodobacterales</taxon>
        <taxon>Roseobacteraceae</taxon>
        <taxon>Roseobacter</taxon>
    </lineage>
</organism>
<sequence length="636" mass="68619">MSKVIGIDLGTTNSCIAIMDGSQPRVVENAEGARTTPSIVAFTDDERLVGQPAKRQAVTNPDNTIFGVKRLIGRRNDDAALAKDKKNLPFAVIDGGNGDAWVEAKGEKYSPSQISAFILGKMKETAESYLGEDVTQAVITVPAYFNDAQRQATKDAGKIAGLEVLRIINEPTAAALAYGLDKEQTQTIAVYDLGGGTFDVTILEIDDGLFEVKSTNGDTFLGGEDFDMRIVNYLADTFKKEHSVDLTQDKMALQRLKEAAEKAKIELSSSSQTEINQPFISMGSNGQPLHMVMKLTRSKLESLVGDLIKASLKPCKDALKDAGLSASDIDEIVLVGGMTRMPKVVEEVTKFFGKEPHKGVNPDEVVAMGAAIQAGVLQGDVKDVVLLDVTPLSLGIETLGGVFTRLIDRNTTIPTKKSQIFSTAEDNQNAVTIRVFQGEREMAADNKILGAFNLENIPPAPRGMPQIEVTFDIDANGIVSVGAMDKGTGKEQKITIQASGGLSDEDIEKMVKDAEENADADKARRELIEAKNQAESLIHSTEKSLEEHSDKVDPTTVEAIELAIAALKDEMESENADKIKSGIQNVTEAAMKLGEAIYNASQEENDDVAEPADGPHDDQDDIVDAEFEDLDNDKRA</sequence>
<keyword id="KW-0067">ATP-binding</keyword>
<keyword id="KW-0143">Chaperone</keyword>
<keyword id="KW-0547">Nucleotide-binding</keyword>
<keyword id="KW-0597">Phosphoprotein</keyword>
<keyword id="KW-1185">Reference proteome</keyword>
<keyword id="KW-0346">Stress response</keyword>
<dbReference type="EMBL" id="CP000362">
    <property type="protein sequence ID" value="ABG30098.1"/>
    <property type="molecule type" value="Genomic_DNA"/>
</dbReference>
<dbReference type="RefSeq" id="WP_011566720.1">
    <property type="nucleotide sequence ID" value="NC_008209.1"/>
</dbReference>
<dbReference type="SMR" id="Q16D45"/>
<dbReference type="STRING" id="375451.RD1_0378"/>
<dbReference type="KEGG" id="rde:RD1_0378"/>
<dbReference type="eggNOG" id="COG0443">
    <property type="taxonomic scope" value="Bacteria"/>
</dbReference>
<dbReference type="HOGENOM" id="CLU_005965_2_4_5"/>
<dbReference type="OrthoDB" id="9766019at2"/>
<dbReference type="Proteomes" id="UP000007029">
    <property type="component" value="Chromosome"/>
</dbReference>
<dbReference type="GO" id="GO:0005524">
    <property type="term" value="F:ATP binding"/>
    <property type="evidence" value="ECO:0007669"/>
    <property type="project" value="UniProtKB-UniRule"/>
</dbReference>
<dbReference type="GO" id="GO:0140662">
    <property type="term" value="F:ATP-dependent protein folding chaperone"/>
    <property type="evidence" value="ECO:0007669"/>
    <property type="project" value="InterPro"/>
</dbReference>
<dbReference type="GO" id="GO:0051082">
    <property type="term" value="F:unfolded protein binding"/>
    <property type="evidence" value="ECO:0007669"/>
    <property type="project" value="InterPro"/>
</dbReference>
<dbReference type="FunFam" id="2.60.34.10:FF:000014">
    <property type="entry name" value="Chaperone protein DnaK HSP70"/>
    <property type="match status" value="1"/>
</dbReference>
<dbReference type="FunFam" id="3.30.30.30:FF:000003">
    <property type="entry name" value="Heat shock protein 9"/>
    <property type="match status" value="1"/>
</dbReference>
<dbReference type="FunFam" id="1.20.1270.10:FF:000001">
    <property type="entry name" value="Molecular chaperone DnaK"/>
    <property type="match status" value="1"/>
</dbReference>
<dbReference type="FunFam" id="3.30.420.40:FF:000004">
    <property type="entry name" value="Molecular chaperone DnaK"/>
    <property type="match status" value="1"/>
</dbReference>
<dbReference type="FunFam" id="3.90.640.10:FF:000003">
    <property type="entry name" value="Molecular chaperone DnaK"/>
    <property type="match status" value="1"/>
</dbReference>
<dbReference type="Gene3D" id="1.20.1270.10">
    <property type="match status" value="1"/>
</dbReference>
<dbReference type="Gene3D" id="3.30.420.40">
    <property type="match status" value="2"/>
</dbReference>
<dbReference type="Gene3D" id="3.90.640.10">
    <property type="entry name" value="Actin, Chain A, domain 4"/>
    <property type="match status" value="1"/>
</dbReference>
<dbReference type="Gene3D" id="2.60.34.10">
    <property type="entry name" value="Substrate Binding Domain Of DNAk, Chain A, domain 1"/>
    <property type="match status" value="1"/>
</dbReference>
<dbReference type="HAMAP" id="MF_00332">
    <property type="entry name" value="DnaK"/>
    <property type="match status" value="1"/>
</dbReference>
<dbReference type="InterPro" id="IPR043129">
    <property type="entry name" value="ATPase_NBD"/>
</dbReference>
<dbReference type="InterPro" id="IPR012725">
    <property type="entry name" value="Chaperone_DnaK"/>
</dbReference>
<dbReference type="InterPro" id="IPR018181">
    <property type="entry name" value="Heat_shock_70_CS"/>
</dbReference>
<dbReference type="InterPro" id="IPR029048">
    <property type="entry name" value="HSP70_C_sf"/>
</dbReference>
<dbReference type="InterPro" id="IPR029047">
    <property type="entry name" value="HSP70_peptide-bd_sf"/>
</dbReference>
<dbReference type="InterPro" id="IPR013126">
    <property type="entry name" value="Hsp_70_fam"/>
</dbReference>
<dbReference type="NCBIfam" id="NF001413">
    <property type="entry name" value="PRK00290.1"/>
    <property type="match status" value="1"/>
</dbReference>
<dbReference type="NCBIfam" id="NF003520">
    <property type="entry name" value="PRK05183.1"/>
    <property type="match status" value="1"/>
</dbReference>
<dbReference type="NCBIfam" id="TIGR02350">
    <property type="entry name" value="prok_dnaK"/>
    <property type="match status" value="1"/>
</dbReference>
<dbReference type="PANTHER" id="PTHR19375">
    <property type="entry name" value="HEAT SHOCK PROTEIN 70KDA"/>
    <property type="match status" value="1"/>
</dbReference>
<dbReference type="Pfam" id="PF00012">
    <property type="entry name" value="HSP70"/>
    <property type="match status" value="1"/>
</dbReference>
<dbReference type="PRINTS" id="PR00301">
    <property type="entry name" value="HEATSHOCK70"/>
</dbReference>
<dbReference type="SUPFAM" id="SSF53067">
    <property type="entry name" value="Actin-like ATPase domain"/>
    <property type="match status" value="2"/>
</dbReference>
<dbReference type="SUPFAM" id="SSF100934">
    <property type="entry name" value="Heat shock protein 70kD (HSP70), C-terminal subdomain"/>
    <property type="match status" value="1"/>
</dbReference>
<dbReference type="SUPFAM" id="SSF100920">
    <property type="entry name" value="Heat shock protein 70kD (HSP70), peptide-binding domain"/>
    <property type="match status" value="1"/>
</dbReference>
<dbReference type="PROSITE" id="PS00297">
    <property type="entry name" value="HSP70_1"/>
    <property type="match status" value="1"/>
</dbReference>
<dbReference type="PROSITE" id="PS00329">
    <property type="entry name" value="HSP70_2"/>
    <property type="match status" value="1"/>
</dbReference>
<dbReference type="PROSITE" id="PS01036">
    <property type="entry name" value="HSP70_3"/>
    <property type="match status" value="1"/>
</dbReference>
<protein>
    <recommendedName>
        <fullName evidence="1">Chaperone protein DnaK</fullName>
    </recommendedName>
    <alternativeName>
        <fullName evidence="1">HSP70</fullName>
    </alternativeName>
    <alternativeName>
        <fullName evidence="1">Heat shock 70 kDa protein</fullName>
    </alternativeName>
    <alternativeName>
        <fullName evidence="1">Heat shock protein 70</fullName>
    </alternativeName>
</protein>